<accession>Q7VVR6</accession>
<name>IHFA_BORPE</name>
<organism>
    <name type="scientific">Bordetella pertussis (strain Tohama I / ATCC BAA-589 / NCTC 13251)</name>
    <dbReference type="NCBI Taxonomy" id="257313"/>
    <lineage>
        <taxon>Bacteria</taxon>
        <taxon>Pseudomonadati</taxon>
        <taxon>Pseudomonadota</taxon>
        <taxon>Betaproteobacteria</taxon>
        <taxon>Burkholderiales</taxon>
        <taxon>Alcaligenaceae</taxon>
        <taxon>Bordetella</taxon>
    </lineage>
</organism>
<evidence type="ECO:0000255" key="1">
    <source>
        <dbReference type="HAMAP-Rule" id="MF_00380"/>
    </source>
</evidence>
<evidence type="ECO:0000256" key="2">
    <source>
        <dbReference type="SAM" id="MobiDB-lite"/>
    </source>
</evidence>
<dbReference type="EMBL" id="BX640418">
    <property type="protein sequence ID" value="CAE42847.1"/>
    <property type="molecule type" value="Genomic_DNA"/>
</dbReference>
<dbReference type="RefSeq" id="NP_881199.1">
    <property type="nucleotide sequence ID" value="NC_002929.2"/>
</dbReference>
<dbReference type="RefSeq" id="WP_010931006.1">
    <property type="nucleotide sequence ID" value="NZ_CP039022.1"/>
</dbReference>
<dbReference type="SMR" id="Q7VVR6"/>
<dbReference type="STRING" id="257313.BP2572"/>
<dbReference type="PaxDb" id="257313-BP2572"/>
<dbReference type="KEGG" id="bpe:BP2572"/>
<dbReference type="PATRIC" id="fig|257313.5.peg.2773"/>
<dbReference type="eggNOG" id="COG0776">
    <property type="taxonomic scope" value="Bacteria"/>
</dbReference>
<dbReference type="HOGENOM" id="CLU_105066_1_0_4"/>
<dbReference type="Proteomes" id="UP000002676">
    <property type="component" value="Chromosome"/>
</dbReference>
<dbReference type="GO" id="GO:0005829">
    <property type="term" value="C:cytosol"/>
    <property type="evidence" value="ECO:0007669"/>
    <property type="project" value="TreeGrafter"/>
</dbReference>
<dbReference type="GO" id="GO:0003677">
    <property type="term" value="F:DNA binding"/>
    <property type="evidence" value="ECO:0007669"/>
    <property type="project" value="UniProtKB-UniRule"/>
</dbReference>
<dbReference type="GO" id="GO:0030527">
    <property type="term" value="F:structural constituent of chromatin"/>
    <property type="evidence" value="ECO:0007669"/>
    <property type="project" value="InterPro"/>
</dbReference>
<dbReference type="GO" id="GO:0006310">
    <property type="term" value="P:DNA recombination"/>
    <property type="evidence" value="ECO:0007669"/>
    <property type="project" value="UniProtKB-UniRule"/>
</dbReference>
<dbReference type="GO" id="GO:0009893">
    <property type="term" value="P:positive regulation of metabolic process"/>
    <property type="evidence" value="ECO:0007669"/>
    <property type="project" value="UniProtKB-ARBA"/>
</dbReference>
<dbReference type="GO" id="GO:0006355">
    <property type="term" value="P:regulation of DNA-templated transcription"/>
    <property type="evidence" value="ECO:0007669"/>
    <property type="project" value="UniProtKB-UniRule"/>
</dbReference>
<dbReference type="GO" id="GO:0006417">
    <property type="term" value="P:regulation of translation"/>
    <property type="evidence" value="ECO:0007669"/>
    <property type="project" value="UniProtKB-UniRule"/>
</dbReference>
<dbReference type="CDD" id="cd13835">
    <property type="entry name" value="IHF_A"/>
    <property type="match status" value="1"/>
</dbReference>
<dbReference type="FunFam" id="4.10.520.10:FF:000002">
    <property type="entry name" value="Integration host factor subunit alpha"/>
    <property type="match status" value="1"/>
</dbReference>
<dbReference type="Gene3D" id="4.10.520.10">
    <property type="entry name" value="IHF-like DNA-binding proteins"/>
    <property type="match status" value="1"/>
</dbReference>
<dbReference type="HAMAP" id="MF_00380">
    <property type="entry name" value="IHF_alpha"/>
    <property type="match status" value="1"/>
</dbReference>
<dbReference type="InterPro" id="IPR000119">
    <property type="entry name" value="Hist_DNA-bd"/>
</dbReference>
<dbReference type="InterPro" id="IPR020816">
    <property type="entry name" value="Histone-like_DNA-bd_CS"/>
</dbReference>
<dbReference type="InterPro" id="IPR010992">
    <property type="entry name" value="IHF-like_DNA-bd_dom_sf"/>
</dbReference>
<dbReference type="InterPro" id="IPR005684">
    <property type="entry name" value="IHF_alpha"/>
</dbReference>
<dbReference type="NCBIfam" id="TIGR00987">
    <property type="entry name" value="himA"/>
    <property type="match status" value="1"/>
</dbReference>
<dbReference type="NCBIfam" id="NF001401">
    <property type="entry name" value="PRK00285.1"/>
    <property type="match status" value="1"/>
</dbReference>
<dbReference type="PANTHER" id="PTHR33175">
    <property type="entry name" value="DNA-BINDING PROTEIN HU"/>
    <property type="match status" value="1"/>
</dbReference>
<dbReference type="PANTHER" id="PTHR33175:SF2">
    <property type="entry name" value="INTEGRATION HOST FACTOR SUBUNIT ALPHA"/>
    <property type="match status" value="1"/>
</dbReference>
<dbReference type="Pfam" id="PF00216">
    <property type="entry name" value="Bac_DNA_binding"/>
    <property type="match status" value="1"/>
</dbReference>
<dbReference type="PRINTS" id="PR01727">
    <property type="entry name" value="DNABINDINGHU"/>
</dbReference>
<dbReference type="SMART" id="SM00411">
    <property type="entry name" value="BHL"/>
    <property type="match status" value="1"/>
</dbReference>
<dbReference type="SUPFAM" id="SSF47729">
    <property type="entry name" value="IHF-like DNA-binding proteins"/>
    <property type="match status" value="1"/>
</dbReference>
<dbReference type="PROSITE" id="PS00045">
    <property type="entry name" value="HISTONE_LIKE"/>
    <property type="match status" value="1"/>
</dbReference>
<comment type="function">
    <text evidence="1">This protein is one of the two subunits of integration host factor, a specific DNA-binding protein that functions in genetic recombination as well as in transcriptional and translational control.</text>
</comment>
<comment type="subunit">
    <text evidence="1">Heterodimer of an alpha and a beta chain.</text>
</comment>
<comment type="similarity">
    <text evidence="1">Belongs to the bacterial histone-like protein family.</text>
</comment>
<proteinExistence type="inferred from homology"/>
<keyword id="KW-0233">DNA recombination</keyword>
<keyword id="KW-0238">DNA-binding</keyword>
<keyword id="KW-1185">Reference proteome</keyword>
<keyword id="KW-0804">Transcription</keyword>
<keyword id="KW-0805">Transcription regulation</keyword>
<keyword id="KW-0810">Translation regulation</keyword>
<gene>
    <name evidence="1" type="primary">ihfA</name>
    <name evidence="1" type="synonym">himA</name>
    <name type="ordered locus">BP2572</name>
</gene>
<sequence>MGTTMLAEPRTLTKAELAELLFERVGLNKREAKDIVDTFFEEIRDALARGDSVKLSGFGNFQVRDKPPRPGRNPKTGETIPIAARRVVTFHASQKLKSVVEQPNSPPDPASAE</sequence>
<protein>
    <recommendedName>
        <fullName evidence="1">Integration host factor subunit alpha</fullName>
        <shortName evidence="1">IHF-alpha</shortName>
    </recommendedName>
</protein>
<reference key="1">
    <citation type="journal article" date="2003" name="Nat. Genet.">
        <title>Comparative analysis of the genome sequences of Bordetella pertussis, Bordetella parapertussis and Bordetella bronchiseptica.</title>
        <authorList>
            <person name="Parkhill J."/>
            <person name="Sebaihia M."/>
            <person name="Preston A."/>
            <person name="Murphy L.D."/>
            <person name="Thomson N.R."/>
            <person name="Harris D.E."/>
            <person name="Holden M.T.G."/>
            <person name="Churcher C.M."/>
            <person name="Bentley S.D."/>
            <person name="Mungall K.L."/>
            <person name="Cerdeno-Tarraga A.-M."/>
            <person name="Temple L."/>
            <person name="James K.D."/>
            <person name="Harris B."/>
            <person name="Quail M.A."/>
            <person name="Achtman M."/>
            <person name="Atkin R."/>
            <person name="Baker S."/>
            <person name="Basham D."/>
            <person name="Bason N."/>
            <person name="Cherevach I."/>
            <person name="Chillingworth T."/>
            <person name="Collins M."/>
            <person name="Cronin A."/>
            <person name="Davis P."/>
            <person name="Doggett J."/>
            <person name="Feltwell T."/>
            <person name="Goble A."/>
            <person name="Hamlin N."/>
            <person name="Hauser H."/>
            <person name="Holroyd S."/>
            <person name="Jagels K."/>
            <person name="Leather S."/>
            <person name="Moule S."/>
            <person name="Norberczak H."/>
            <person name="O'Neil S."/>
            <person name="Ormond D."/>
            <person name="Price C."/>
            <person name="Rabbinowitsch E."/>
            <person name="Rutter S."/>
            <person name="Sanders M."/>
            <person name="Saunders D."/>
            <person name="Seeger K."/>
            <person name="Sharp S."/>
            <person name="Simmonds M."/>
            <person name="Skelton J."/>
            <person name="Squares R."/>
            <person name="Squares S."/>
            <person name="Stevens K."/>
            <person name="Unwin L."/>
            <person name="Whitehead S."/>
            <person name="Barrell B.G."/>
            <person name="Maskell D.J."/>
        </authorList>
    </citation>
    <scope>NUCLEOTIDE SEQUENCE [LARGE SCALE GENOMIC DNA]</scope>
    <source>
        <strain>Tohama I / ATCC BAA-589 / NCTC 13251</strain>
    </source>
</reference>
<feature type="chain" id="PRO_0000277717" description="Integration host factor subunit alpha">
    <location>
        <begin position="1"/>
        <end position="113"/>
    </location>
</feature>
<feature type="region of interest" description="Disordered" evidence="2">
    <location>
        <begin position="59"/>
        <end position="80"/>
    </location>
</feature>
<feature type="region of interest" description="Disordered" evidence="2">
    <location>
        <begin position="94"/>
        <end position="113"/>
    </location>
</feature>
<feature type="compositionally biased region" description="Pro residues" evidence="2">
    <location>
        <begin position="104"/>
        <end position="113"/>
    </location>
</feature>